<evidence type="ECO:0000250" key="1"/>
<evidence type="ECO:0000255" key="2"/>
<evidence type="ECO:0000305" key="3"/>
<feature type="transit peptide" description="Mitochondrion" evidence="2">
    <location>
        <begin position="1"/>
        <end position="19"/>
    </location>
</feature>
<feature type="chain" id="PRO_0000043259" description="Small ribosomal subunit protein uS10m">
    <location>
        <begin position="20"/>
        <end position="235"/>
    </location>
</feature>
<sequence length="235" mass="26716">MLRTSVRSPLLYRCLSKRFQSTAVPLSSKAVQNDLELTPKQQTNSSTTTSTNIPPQLPVNVEALYYAPLKNPVTHGHLVADLQLRAYDNENLDFFCDFILRAGYYLGLPMTGPKPLPTRRERWTVIRSPFVHAKSKENFERHTHKRLIRVWDSNPEVVQMLVDYITKNSIAGVGLKCTTYQRTTVDAKSGKISDAIEEINSTHNINPSLKENEEIGAKVVELLNTPTFKKYLEEK</sequence>
<reference key="1">
    <citation type="journal article" date="2004" name="Nature">
        <title>Genome evolution in yeasts.</title>
        <authorList>
            <person name="Dujon B."/>
            <person name="Sherman D."/>
            <person name="Fischer G."/>
            <person name="Durrens P."/>
            <person name="Casaregola S."/>
            <person name="Lafontaine I."/>
            <person name="de Montigny J."/>
            <person name="Marck C."/>
            <person name="Neuveglise C."/>
            <person name="Talla E."/>
            <person name="Goffard N."/>
            <person name="Frangeul L."/>
            <person name="Aigle M."/>
            <person name="Anthouard V."/>
            <person name="Babour A."/>
            <person name="Barbe V."/>
            <person name="Barnay S."/>
            <person name="Blanchin S."/>
            <person name="Beckerich J.-M."/>
            <person name="Beyne E."/>
            <person name="Bleykasten C."/>
            <person name="Boisrame A."/>
            <person name="Boyer J."/>
            <person name="Cattolico L."/>
            <person name="Confanioleri F."/>
            <person name="de Daruvar A."/>
            <person name="Despons L."/>
            <person name="Fabre E."/>
            <person name="Fairhead C."/>
            <person name="Ferry-Dumazet H."/>
            <person name="Groppi A."/>
            <person name="Hantraye F."/>
            <person name="Hennequin C."/>
            <person name="Jauniaux N."/>
            <person name="Joyet P."/>
            <person name="Kachouri R."/>
            <person name="Kerrest A."/>
            <person name="Koszul R."/>
            <person name="Lemaire M."/>
            <person name="Lesur I."/>
            <person name="Ma L."/>
            <person name="Muller H."/>
            <person name="Nicaud J.-M."/>
            <person name="Nikolski M."/>
            <person name="Oztas S."/>
            <person name="Ozier-Kalogeropoulos O."/>
            <person name="Pellenz S."/>
            <person name="Potier S."/>
            <person name="Richard G.-F."/>
            <person name="Straub M.-L."/>
            <person name="Suleau A."/>
            <person name="Swennen D."/>
            <person name="Tekaia F."/>
            <person name="Wesolowski-Louvel M."/>
            <person name="Westhof E."/>
            <person name="Wirth B."/>
            <person name="Zeniou-Meyer M."/>
            <person name="Zivanovic Y."/>
            <person name="Bolotin-Fukuhara M."/>
            <person name="Thierry A."/>
            <person name="Bouchier C."/>
            <person name="Caudron B."/>
            <person name="Scarpelli C."/>
            <person name="Gaillardin C."/>
            <person name="Weissenbach J."/>
            <person name="Wincker P."/>
            <person name="Souciet J.-L."/>
        </authorList>
    </citation>
    <scope>NUCLEOTIDE SEQUENCE [LARGE SCALE GENOMIC DNA]</scope>
    <source>
        <strain>ATCC 2001 / BCRC 20586 / JCM 3761 / NBRC 0622 / NRRL Y-65 / CBS 138</strain>
    </source>
</reference>
<keyword id="KW-0496">Mitochondrion</keyword>
<keyword id="KW-1185">Reference proteome</keyword>
<keyword id="KW-0687">Ribonucleoprotein</keyword>
<keyword id="KW-0689">Ribosomal protein</keyword>
<keyword id="KW-0809">Transit peptide</keyword>
<comment type="function">
    <text evidence="1">Involved in mitochondrial genome encoded proteins translation. Involved in the binding of tRNA to the ribosomes (By similarity).</text>
</comment>
<comment type="subunit">
    <text evidence="1">Part of the mitochondrial small ribosomal subunit.</text>
</comment>
<comment type="subcellular location">
    <subcellularLocation>
        <location evidence="1">Mitochondrion</location>
    </subcellularLocation>
</comment>
<comment type="similarity">
    <text evidence="3">Belongs to the universal ribosomal protein uS10 family.</text>
</comment>
<gene>
    <name type="primary">RSM10</name>
    <name type="ordered locus">CAGL0K12056g</name>
</gene>
<dbReference type="EMBL" id="CR380957">
    <property type="protein sequence ID" value="CAG61702.1"/>
    <property type="molecule type" value="Genomic_DNA"/>
</dbReference>
<dbReference type="RefSeq" id="XP_448739.1">
    <property type="nucleotide sequence ID" value="XM_448739.1"/>
</dbReference>
<dbReference type="SMR" id="Q6FM05"/>
<dbReference type="FunCoup" id="Q6FM05">
    <property type="interactions" value="308"/>
</dbReference>
<dbReference type="STRING" id="284593.Q6FM05"/>
<dbReference type="EnsemblFungi" id="CAGL0K12056g-T">
    <property type="protein sequence ID" value="CAGL0K12056g-T-p1"/>
    <property type="gene ID" value="CAGL0K12056g"/>
</dbReference>
<dbReference type="KEGG" id="cgr:2889967"/>
<dbReference type="CGD" id="CAL0134859">
    <property type="gene designation" value="CAGL0K12056g"/>
</dbReference>
<dbReference type="VEuPathDB" id="FungiDB:CAGL0K12056g"/>
<dbReference type="eggNOG" id="KOG3321">
    <property type="taxonomic scope" value="Eukaryota"/>
</dbReference>
<dbReference type="HOGENOM" id="CLU_051208_4_0_1"/>
<dbReference type="InParanoid" id="Q6FM05"/>
<dbReference type="OMA" id="KVESWTL"/>
<dbReference type="Proteomes" id="UP000002428">
    <property type="component" value="Chromosome K"/>
</dbReference>
<dbReference type="GO" id="GO:0005739">
    <property type="term" value="C:mitochondrion"/>
    <property type="evidence" value="ECO:0007669"/>
    <property type="project" value="UniProtKB-SubCell"/>
</dbReference>
<dbReference type="GO" id="GO:1990904">
    <property type="term" value="C:ribonucleoprotein complex"/>
    <property type="evidence" value="ECO:0007669"/>
    <property type="project" value="UniProtKB-KW"/>
</dbReference>
<dbReference type="GO" id="GO:0005840">
    <property type="term" value="C:ribosome"/>
    <property type="evidence" value="ECO:0007669"/>
    <property type="project" value="UniProtKB-KW"/>
</dbReference>
<dbReference type="GO" id="GO:0003735">
    <property type="term" value="F:structural constituent of ribosome"/>
    <property type="evidence" value="ECO:0007669"/>
    <property type="project" value="InterPro"/>
</dbReference>
<dbReference type="GO" id="GO:0006412">
    <property type="term" value="P:translation"/>
    <property type="evidence" value="ECO:0007669"/>
    <property type="project" value="InterPro"/>
</dbReference>
<dbReference type="FunFam" id="3.30.70.600:FF:000003">
    <property type="entry name" value="30S ribosomal protein S10"/>
    <property type="match status" value="1"/>
</dbReference>
<dbReference type="Gene3D" id="3.30.70.600">
    <property type="entry name" value="Ribosomal protein S10 domain"/>
    <property type="match status" value="1"/>
</dbReference>
<dbReference type="HAMAP" id="MF_00508">
    <property type="entry name" value="Ribosomal_uS10"/>
    <property type="match status" value="1"/>
</dbReference>
<dbReference type="InterPro" id="IPR001848">
    <property type="entry name" value="Ribosomal_uS10"/>
</dbReference>
<dbReference type="InterPro" id="IPR027486">
    <property type="entry name" value="Ribosomal_uS10_dom"/>
</dbReference>
<dbReference type="InterPro" id="IPR036838">
    <property type="entry name" value="Ribosomal_uS10_dom_sf"/>
</dbReference>
<dbReference type="NCBIfam" id="TIGR01049">
    <property type="entry name" value="rpsJ_bact"/>
    <property type="match status" value="1"/>
</dbReference>
<dbReference type="PANTHER" id="PTHR11700">
    <property type="entry name" value="30S RIBOSOMAL PROTEIN S10 FAMILY MEMBER"/>
    <property type="match status" value="1"/>
</dbReference>
<dbReference type="Pfam" id="PF00338">
    <property type="entry name" value="Ribosomal_S10"/>
    <property type="match status" value="1"/>
</dbReference>
<dbReference type="PRINTS" id="PR00971">
    <property type="entry name" value="RIBOSOMALS10"/>
</dbReference>
<dbReference type="SMART" id="SM01403">
    <property type="entry name" value="Ribosomal_S10"/>
    <property type="match status" value="1"/>
</dbReference>
<dbReference type="SUPFAM" id="SSF54999">
    <property type="entry name" value="Ribosomal protein S10"/>
    <property type="match status" value="1"/>
</dbReference>
<proteinExistence type="inferred from homology"/>
<protein>
    <recommendedName>
        <fullName evidence="3">Small ribosomal subunit protein uS10m</fullName>
    </recommendedName>
    <alternativeName>
        <fullName>37S ribosomal protein S10, mitochondrial</fullName>
    </alternativeName>
    <alternativeName>
        <fullName>Mitochondrial ribosomal small subunit protein 10</fullName>
    </alternativeName>
</protein>
<name>RT10_CANGA</name>
<organism>
    <name type="scientific">Candida glabrata (strain ATCC 2001 / BCRC 20586 / JCM 3761 / NBRC 0622 / NRRL Y-65 / CBS 138)</name>
    <name type="common">Yeast</name>
    <name type="synonym">Nakaseomyces glabratus</name>
    <dbReference type="NCBI Taxonomy" id="284593"/>
    <lineage>
        <taxon>Eukaryota</taxon>
        <taxon>Fungi</taxon>
        <taxon>Dikarya</taxon>
        <taxon>Ascomycota</taxon>
        <taxon>Saccharomycotina</taxon>
        <taxon>Saccharomycetes</taxon>
        <taxon>Saccharomycetales</taxon>
        <taxon>Saccharomycetaceae</taxon>
        <taxon>Nakaseomyces</taxon>
    </lineage>
</organism>
<accession>Q6FM05</accession>